<organism>
    <name type="scientific">Mycosarcoma maydis</name>
    <name type="common">Corn smut fungus</name>
    <name type="synonym">Ustilago maydis</name>
    <dbReference type="NCBI Taxonomy" id="5270"/>
    <lineage>
        <taxon>Eukaryota</taxon>
        <taxon>Fungi</taxon>
        <taxon>Dikarya</taxon>
        <taxon>Basidiomycota</taxon>
        <taxon>Ustilaginomycotina</taxon>
        <taxon>Ustilaginomycetes</taxon>
        <taxon>Ustilaginales</taxon>
        <taxon>Ustilaginaceae</taxon>
        <taxon>Mycosarcoma</taxon>
    </lineage>
</organism>
<reference key="1">
    <citation type="journal article" date="2006" name="Nature">
        <title>Insights from the genome of the biotrophic fungal plant pathogen Ustilago maydis.</title>
        <authorList>
            <person name="Kaemper J."/>
            <person name="Kahmann R."/>
            <person name="Boelker M."/>
            <person name="Ma L.-J."/>
            <person name="Brefort T."/>
            <person name="Saville B.J."/>
            <person name="Banuett F."/>
            <person name="Kronstad J.W."/>
            <person name="Gold S.E."/>
            <person name="Mueller O."/>
            <person name="Perlin M.H."/>
            <person name="Woesten H.A.B."/>
            <person name="de Vries R."/>
            <person name="Ruiz-Herrera J."/>
            <person name="Reynaga-Pena C.G."/>
            <person name="Snetselaar K."/>
            <person name="McCann M."/>
            <person name="Perez-Martin J."/>
            <person name="Feldbruegge M."/>
            <person name="Basse C.W."/>
            <person name="Steinberg G."/>
            <person name="Ibeas J.I."/>
            <person name="Holloman W."/>
            <person name="Guzman P."/>
            <person name="Farman M.L."/>
            <person name="Stajich J.E."/>
            <person name="Sentandreu R."/>
            <person name="Gonzalez-Prieto J.M."/>
            <person name="Kennell J.C."/>
            <person name="Molina L."/>
            <person name="Schirawski J."/>
            <person name="Mendoza-Mendoza A."/>
            <person name="Greilinger D."/>
            <person name="Muench K."/>
            <person name="Roessel N."/>
            <person name="Scherer M."/>
            <person name="Vranes M."/>
            <person name="Ladendorf O."/>
            <person name="Vincon V."/>
            <person name="Fuchs U."/>
            <person name="Sandrock B."/>
            <person name="Meng S."/>
            <person name="Ho E.C.H."/>
            <person name="Cahill M.J."/>
            <person name="Boyce K.J."/>
            <person name="Klose J."/>
            <person name="Klosterman S.J."/>
            <person name="Deelstra H.J."/>
            <person name="Ortiz-Castellanos L."/>
            <person name="Li W."/>
            <person name="Sanchez-Alonso P."/>
            <person name="Schreier P.H."/>
            <person name="Haeuser-Hahn I."/>
            <person name="Vaupel M."/>
            <person name="Koopmann E."/>
            <person name="Friedrich G."/>
            <person name="Voss H."/>
            <person name="Schlueter T."/>
            <person name="Margolis J."/>
            <person name="Platt D."/>
            <person name="Swimmer C."/>
            <person name="Gnirke A."/>
            <person name="Chen F."/>
            <person name="Vysotskaia V."/>
            <person name="Mannhaupt G."/>
            <person name="Gueldener U."/>
            <person name="Muensterkoetter M."/>
            <person name="Haase D."/>
            <person name="Oesterheld M."/>
            <person name="Mewes H.-W."/>
            <person name="Mauceli E.W."/>
            <person name="DeCaprio D."/>
            <person name="Wade C.M."/>
            <person name="Butler J."/>
            <person name="Young S.K."/>
            <person name="Jaffe D.B."/>
            <person name="Calvo S.E."/>
            <person name="Nusbaum C."/>
            <person name="Galagan J.E."/>
            <person name="Birren B.W."/>
        </authorList>
    </citation>
    <scope>NUCLEOTIDE SEQUENCE [LARGE SCALE GENOMIC DNA]</scope>
    <source>
        <strain>DSM 14603 / FGSC 9021 / UM521</strain>
    </source>
</reference>
<reference key="2">
    <citation type="submission" date="2014-09" db="EMBL/GenBank/DDBJ databases">
        <authorList>
            <person name="Gueldener U."/>
            <person name="Muensterkoetter M."/>
            <person name="Walter M.C."/>
            <person name="Mannhaupt G."/>
            <person name="Kahmann R."/>
        </authorList>
    </citation>
    <scope>GENOME REANNOTATION</scope>
    <source>
        <strain>DSM 14603 / FGSC 9021 / UM521</strain>
    </source>
</reference>
<dbReference type="EMBL" id="CM003144">
    <property type="protein sequence ID" value="KIS69825.1"/>
    <property type="molecule type" value="Genomic_DNA"/>
</dbReference>
<dbReference type="RefSeq" id="XP_011388657.1">
    <property type="nucleotide sequence ID" value="XM_011390355.1"/>
</dbReference>
<dbReference type="SMR" id="Q4PC17"/>
<dbReference type="FunCoup" id="Q4PC17">
    <property type="interactions" value="759"/>
</dbReference>
<dbReference type="IntAct" id="Q4PC17">
    <property type="interactions" value="1"/>
</dbReference>
<dbReference type="MINT" id="Q4PC17"/>
<dbReference type="STRING" id="237631.Q4PC17"/>
<dbReference type="EnsemblFungi" id="KIS69825">
    <property type="protein sequence ID" value="KIS69825"/>
    <property type="gene ID" value="UMAG_02346"/>
</dbReference>
<dbReference type="GeneID" id="23563116"/>
<dbReference type="KEGG" id="uma:UMAG_02346"/>
<dbReference type="VEuPathDB" id="FungiDB:UMAG_02346"/>
<dbReference type="eggNOG" id="KOG0110">
    <property type="taxonomic scope" value="Eukaryota"/>
</dbReference>
<dbReference type="HOGENOM" id="CLU_008479_0_0_1"/>
<dbReference type="InParanoid" id="Q4PC17"/>
<dbReference type="OMA" id="FNNTCIQ"/>
<dbReference type="OrthoDB" id="439639at2759"/>
<dbReference type="Proteomes" id="UP000000561">
    <property type="component" value="Chromosome 5"/>
</dbReference>
<dbReference type="GO" id="GO:0016607">
    <property type="term" value="C:nuclear speck"/>
    <property type="evidence" value="ECO:0000318"/>
    <property type="project" value="GO_Central"/>
</dbReference>
<dbReference type="GO" id="GO:0005730">
    <property type="term" value="C:nucleolus"/>
    <property type="evidence" value="ECO:0000318"/>
    <property type="project" value="GO_Central"/>
</dbReference>
<dbReference type="GO" id="GO:1990904">
    <property type="term" value="C:ribonucleoprotein complex"/>
    <property type="evidence" value="ECO:0007669"/>
    <property type="project" value="UniProtKB-KW"/>
</dbReference>
<dbReference type="GO" id="GO:0003723">
    <property type="term" value="F:RNA binding"/>
    <property type="evidence" value="ECO:0000318"/>
    <property type="project" value="GO_Central"/>
</dbReference>
<dbReference type="GO" id="GO:0006364">
    <property type="term" value="P:rRNA processing"/>
    <property type="evidence" value="ECO:0007669"/>
    <property type="project" value="UniProtKB-KW"/>
</dbReference>
<dbReference type="CDD" id="cd12565">
    <property type="entry name" value="RRM1_MRD1"/>
    <property type="match status" value="1"/>
</dbReference>
<dbReference type="CDD" id="cd12568">
    <property type="entry name" value="RRM3_MRD1"/>
    <property type="match status" value="1"/>
</dbReference>
<dbReference type="CDD" id="cd12316">
    <property type="entry name" value="RRM3_RBM19_RRM2_MRD1"/>
    <property type="match status" value="1"/>
</dbReference>
<dbReference type="CDD" id="cd12319">
    <property type="entry name" value="RRM4_MRD1"/>
    <property type="match status" value="1"/>
</dbReference>
<dbReference type="CDD" id="cd12570">
    <property type="entry name" value="RRM5_MRD1"/>
    <property type="match status" value="1"/>
</dbReference>
<dbReference type="FunFam" id="3.30.70.330:FF:002269">
    <property type="match status" value="1"/>
</dbReference>
<dbReference type="Gene3D" id="3.30.70.330">
    <property type="match status" value="5"/>
</dbReference>
<dbReference type="InterPro" id="IPR034482">
    <property type="entry name" value="Mrd1_RRM3"/>
</dbReference>
<dbReference type="InterPro" id="IPR012677">
    <property type="entry name" value="Nucleotide-bd_a/b_plait_sf"/>
</dbReference>
<dbReference type="InterPro" id="IPR035979">
    <property type="entry name" value="RBD_domain_sf"/>
</dbReference>
<dbReference type="InterPro" id="IPR000504">
    <property type="entry name" value="RRM_dom"/>
</dbReference>
<dbReference type="InterPro" id="IPR051945">
    <property type="entry name" value="RRM_MRD1_RNA_proc_ribogen"/>
</dbReference>
<dbReference type="PANTHER" id="PTHR48039">
    <property type="entry name" value="RNA-BINDING MOTIF PROTEIN 14B"/>
    <property type="match status" value="1"/>
</dbReference>
<dbReference type="PANTHER" id="PTHR48039:SF5">
    <property type="entry name" value="RNA-BINDING PROTEIN 28"/>
    <property type="match status" value="1"/>
</dbReference>
<dbReference type="Pfam" id="PF00076">
    <property type="entry name" value="RRM_1"/>
    <property type="match status" value="5"/>
</dbReference>
<dbReference type="SMART" id="SM00360">
    <property type="entry name" value="RRM"/>
    <property type="match status" value="5"/>
</dbReference>
<dbReference type="SUPFAM" id="SSF54928">
    <property type="entry name" value="RNA-binding domain, RBD"/>
    <property type="match status" value="4"/>
</dbReference>
<dbReference type="PROSITE" id="PS50102">
    <property type="entry name" value="RRM"/>
    <property type="match status" value="5"/>
</dbReference>
<sequence>MSRLIVRGLPSYLTDARLREHFSQKGAVTDVKLMRRPDGTSRKFGFVGYRSEQEAQQALDYFNRTFIDTSRISIELAKKIGDEELVHQREERRNRRNAGAGPEGSASTSDARKRKADKSDTQQEEGSGKKKPKKGGAISFEEFMSVMQPKAKRKAWQNEDALPEQTMQDIVAPEEAIQKKAARKALKKADAAAAATATAESTAAQPDSGREETPEPDAAANDVGLTDEEYMRLRMKHRVGTDLDTLEQSSSGPEFEQSDNEKDDDDAAADSDPESEDEPIHDQGFECKQAEMQRKAQQAAEKDQKLVDQIMESGRLFIRNLPFAASGDEILAFFESFGTVKQVHIPLDKQTKASKGLAFVSFSDPAHALAAYRAKDGSTFQGRLLHLLPAVNKDALAETGSKKTATLKQARAEQKKQDATKDFNWSMLYMSSDAVASSIADRLGVNKSDILNPGANGGADNAAVRLALAETRIIQETKEFLAQQGINVDAFQGAKGPRSDTTILVKNIPYGTSAEEVEKLFGEHGEVDKVLIPPSGTIAVVEMPVVNEARLAFRAIAYKRFKGGILYLEKAPVGLLTQHKVGEKVVKQAPIVGKSIDSSNPSVDLDGPAGAGAGDEAVDGATLYVKNLSFSTTDERLTAFFHGLSDFAFARIQTKPDPRRPGARLSMGYGFVGFKSIDAARTAQKAMDGKVLDAHTLVVTFARRNAEASTTSISSGGSTKILIKNLPFEATKRDIRDLFSSQGQLKSVRLPKKFDNTTRGFGFVEYSTVREAQSAMEALKHTHLLGRHLVLQWSHLASSTQQQVDMQRSKTKQHFVNTHDNAARADPSKRAKIKLNSAQISEAIKQAKRQRDDVDDDE</sequence>
<proteinExistence type="inferred from homology"/>
<evidence type="ECO:0000250" key="1"/>
<evidence type="ECO:0000255" key="2">
    <source>
        <dbReference type="PROSITE-ProRule" id="PRU00176"/>
    </source>
</evidence>
<evidence type="ECO:0000256" key="3">
    <source>
        <dbReference type="SAM" id="MobiDB-lite"/>
    </source>
</evidence>
<evidence type="ECO:0000305" key="4"/>
<name>MRD1_MYCMD</name>
<gene>
    <name type="primary">MRD1</name>
    <name type="ORF">UMAG_02346</name>
</gene>
<keyword id="KW-0539">Nucleus</keyword>
<keyword id="KW-1185">Reference proteome</keyword>
<keyword id="KW-0677">Repeat</keyword>
<keyword id="KW-0687">Ribonucleoprotein</keyword>
<keyword id="KW-0694">RNA-binding</keyword>
<keyword id="KW-0698">rRNA processing</keyword>
<comment type="function">
    <text evidence="1">Involved in pre-rRNA processing.</text>
</comment>
<comment type="subcellular location">
    <subcellularLocation>
        <location evidence="1">Nucleus</location>
    </subcellularLocation>
</comment>
<comment type="similarity">
    <text evidence="4">Belongs to the RRM MRD1 family.</text>
</comment>
<feature type="chain" id="PRO_0000081645" description="Multiple RNA-binding domain-containing protein 1">
    <location>
        <begin position="1"/>
        <end position="858"/>
    </location>
</feature>
<feature type="domain" description="RRM 1" evidence="2">
    <location>
        <begin position="2"/>
        <end position="79"/>
    </location>
</feature>
<feature type="domain" description="RRM 2" evidence="2">
    <location>
        <begin position="314"/>
        <end position="392"/>
    </location>
</feature>
<feature type="domain" description="RRM 3" evidence="2">
    <location>
        <begin position="501"/>
        <end position="573"/>
    </location>
</feature>
<feature type="domain" description="RRM 4" evidence="2">
    <location>
        <begin position="621"/>
        <end position="704"/>
    </location>
</feature>
<feature type="domain" description="RRM 5" evidence="2">
    <location>
        <begin position="719"/>
        <end position="796"/>
    </location>
</feature>
<feature type="region of interest" description="Disordered" evidence="3">
    <location>
        <begin position="87"/>
        <end position="138"/>
    </location>
</feature>
<feature type="region of interest" description="Disordered" evidence="3">
    <location>
        <begin position="150"/>
        <end position="169"/>
    </location>
</feature>
<feature type="region of interest" description="Disordered" evidence="3">
    <location>
        <begin position="178"/>
        <end position="229"/>
    </location>
</feature>
<feature type="region of interest" description="Disordered" evidence="3">
    <location>
        <begin position="241"/>
        <end position="280"/>
    </location>
</feature>
<feature type="compositionally biased region" description="Low complexity" evidence="3">
    <location>
        <begin position="191"/>
        <end position="204"/>
    </location>
</feature>
<feature type="compositionally biased region" description="Acidic residues" evidence="3">
    <location>
        <begin position="256"/>
        <end position="277"/>
    </location>
</feature>
<accession>Q4PC17</accession>
<accession>A0A0D1E600</accession>
<protein>
    <recommendedName>
        <fullName>Multiple RNA-binding domain-containing protein 1</fullName>
    </recommendedName>
</protein>